<accession>P07713</accession>
<accession>A4V009</accession>
<accession>P91651</accession>
<accession>Q6AWM1</accession>
<accession>Q8I0M7</accession>
<accession>Q8ITK4</accession>
<accession>Q9VQC6</accession>
<comment type="function">
    <text evidence="4 5 6 8 9 10 12 13 14 17 18 19 21 22 23">Required during oogenesis for eggshell patterning and dorsal/ventral patterning of the embryo. Acts as a morphogen during embryogenesis to pattern the dorsal/ventral axis, specifying dorsal ectoderm and amnioserosa cell fate within the dorsal half of the embryo; this activity is antagonized by binding to sog and tsg. Induces the formation of visceral mesoderm and the heart in early embryos. Required later in embryogenesis for dorsal closure and patterning of the hindgut. Also functions postembryonically as a long-range morphogen during imaginal disk development; is responsible for the progression of the morphogenetic furrow during eye development. Patterns the wing imaginal disk along its anterior/posterior axis and has a role in positioning pro-veins. Also required to subdivide the wing disk along the proximal/distal axis into body wall (notum) and wing. Ensures the correct architecture of wing epithelial cells. Has multiple roles in the developing tracheal system, controlling directed tracheal cell migration during embryogenesis and later specifying the fate of fusion cells in the tracheal branches. Required for viability of larvae. Essential for the maintenance and division of germline stem cells in the ovary. Signals via the type I receptor tkv, the type II receptor punt, and in some tissues via the type I receptor sax, in a signaling cascade that leads to activation and repression of target genes.</text>
</comment>
<comment type="subunit">
    <text evidence="12 15">Heterodimers of scw/dpp are the active subunit, dpp/dpp homodimers elicit a basal response and scw/scw homodimers alone are ineffective in specifying a dorsal pattern. Component of a complex composed of dpp, sog and tsg. Interacts with nord and gbb; the interaction interferes with dpp secretion (PubMed:35037619).</text>
</comment>
<comment type="interaction">
    <interactant intactId="EBI-499422">
        <id>P07713</id>
    </interactant>
    <interactant intactId="EBI-109669">
        <id>P08120</id>
        <label>Col4a1</label>
    </interactant>
    <organismsDiffer>false</organismsDiffer>
    <experiments>3</experiments>
</comment>
<comment type="interaction">
    <interactant intactId="EBI-499422">
        <id>P07713</id>
    </interactant>
    <interactant intactId="EBI-152934">
        <id>Q9VMV5</id>
        <label>vkg</label>
    </interactant>
    <organismsDiffer>false</organismsDiffer>
    <experiments>5</experiments>
</comment>
<comment type="subcellular location">
    <subcellularLocation>
        <location evidence="6 7 13 15">Secreted</location>
    </subcellularLocation>
    <text>Is internalized by receptor-mediated endocytosis.</text>
</comment>
<comment type="tissue specificity">
    <text evidence="6 7 8 12">Expressed in the dorsal region of the embryo, and becomes enriched in a dorsal midline stripe just prior to gastrulation. Expressed in midgut mesoderm and in two overlapping regions of the embryonic large intestine. Expressed in a long-range concentration gradient in the wing imaginal disk.</text>
</comment>
<comment type="developmental stage">
    <text evidence="5 15 16">In the third-instar larval stage, expressed in a stripe of cells at the anterior-posterior (A/P) compartment boundary of wing cells (at protein level) (PubMed:35037619, PubMed:35609633). In the pupal wing, expression does not change during the first 8 hrs after pupation (AP) but then disappears from the A/P boundary and commences expression in the differentiating longitudinal veins (at protein level) (PubMed:35037619). Expressed both maternally and zygotically (PubMed:10903186). First detected during stages 8 to 10 of oogenesis (PubMed:10903186).</text>
</comment>
<comment type="similarity">
    <text evidence="24">Belongs to the TGF-beta family.</text>
</comment>
<organism>
    <name type="scientific">Drosophila melanogaster</name>
    <name type="common">Fruit fly</name>
    <dbReference type="NCBI Taxonomy" id="7227"/>
    <lineage>
        <taxon>Eukaryota</taxon>
        <taxon>Metazoa</taxon>
        <taxon>Ecdysozoa</taxon>
        <taxon>Arthropoda</taxon>
        <taxon>Hexapoda</taxon>
        <taxon>Insecta</taxon>
        <taxon>Pterygota</taxon>
        <taxon>Neoptera</taxon>
        <taxon>Endopterygota</taxon>
        <taxon>Diptera</taxon>
        <taxon>Brachycera</taxon>
        <taxon>Muscomorpha</taxon>
        <taxon>Ephydroidea</taxon>
        <taxon>Drosophilidae</taxon>
        <taxon>Drosophila</taxon>
        <taxon>Sophophora</taxon>
    </lineage>
</organism>
<keyword id="KW-0217">Developmental protein</keyword>
<keyword id="KW-0221">Differentiation</keyword>
<keyword id="KW-0903">Direct protein sequencing</keyword>
<keyword id="KW-1015">Disulfide bond</keyword>
<keyword id="KW-0325">Glycoprotein</keyword>
<keyword id="KW-0339">Growth factor</keyword>
<keyword id="KW-1185">Reference proteome</keyword>
<keyword id="KW-0964">Secreted</keyword>
<keyword id="KW-0732">Signal</keyword>
<feature type="signal peptide" evidence="2">
    <location>
        <begin position="1"/>
        <end position="23"/>
    </location>
</feature>
<feature type="propeptide" id="PRO_0000033664" evidence="13">
    <location>
        <begin position="24"/>
        <end position="456"/>
    </location>
</feature>
<feature type="chain" id="PRO_0000033665" description="Protein decapentaplegic">
    <location>
        <begin position="457"/>
        <end position="588"/>
    </location>
</feature>
<feature type="region of interest" description="Disordered" evidence="3">
    <location>
        <begin position="74"/>
        <end position="169"/>
    </location>
</feature>
<feature type="region of interest" description="Disordered" evidence="3">
    <location>
        <begin position="454"/>
        <end position="484"/>
    </location>
</feature>
<feature type="compositionally biased region" description="Basic and acidic residues" evidence="3">
    <location>
        <begin position="96"/>
        <end position="119"/>
    </location>
</feature>
<feature type="compositionally biased region" description="Basic residues" evidence="3">
    <location>
        <begin position="140"/>
        <end position="153"/>
    </location>
</feature>
<feature type="compositionally biased region" description="Low complexity" evidence="3">
    <location>
        <begin position="156"/>
        <end position="169"/>
    </location>
</feature>
<feature type="compositionally biased region" description="Basic residues" evidence="3">
    <location>
        <begin position="468"/>
        <end position="481"/>
    </location>
</feature>
<feature type="site" description="Cleavage" evidence="13">
    <location>
        <position position="456"/>
    </location>
</feature>
<feature type="glycosylation site" description="N-linked (GlcNAc...) asparagine" evidence="2">
    <location>
        <position position="120"/>
    </location>
</feature>
<feature type="glycosylation site" description="N-linked (GlcNAc...) asparagine" evidence="2">
    <location>
        <position position="342"/>
    </location>
</feature>
<feature type="glycosylation site" description="N-linked (GlcNAc...) asparagine" evidence="2">
    <location>
        <position position="377"/>
    </location>
</feature>
<feature type="glycosylation site" description="N-linked (GlcNAc...) asparagine" evidence="2">
    <location>
        <position position="529"/>
    </location>
</feature>
<feature type="disulfide bond" evidence="1">
    <location>
        <begin position="487"/>
        <end position="553"/>
    </location>
</feature>
<feature type="disulfide bond" evidence="1">
    <location>
        <begin position="516"/>
        <end position="585"/>
    </location>
</feature>
<feature type="disulfide bond" evidence="1">
    <location>
        <begin position="520"/>
        <end position="587"/>
    </location>
</feature>
<feature type="disulfide bond" description="Interchain" evidence="1">
    <location>
        <position position="552"/>
    </location>
</feature>
<feature type="sequence variant" description="In strain: dp cn bw." evidence="20">
    <original>V</original>
    <variation>G</variation>
    <location>
        <position position="59"/>
    </location>
</feature>
<feature type="sequence variant" description="In strain: dp cn bw." evidence="20">
    <original>K</original>
    <variation>M</variation>
    <location>
        <position position="121"/>
    </location>
</feature>
<feature type="sequence variant" evidence="11">
    <original>P</original>
    <variation>A</variation>
    <location>
        <position position="439"/>
    </location>
</feature>
<feature type="sequence conflict" description="In Ref. 1; AAA28482." evidence="24" ref="1">
    <original>QP</original>
    <variation>HA</variation>
    <location>
        <begin position="473"/>
        <end position="474"/>
    </location>
</feature>
<feature type="sequence conflict" description="In Ref. 5; AAT94456." evidence="24" ref="5">
    <original>T</original>
    <variation>K</variation>
    <location>
        <position position="556"/>
    </location>
</feature>
<feature type="sequence conflict" description="In Ref. 5; AAT94456." evidence="24" ref="5">
    <original>D</original>
    <variation>G</variation>
    <location>
        <position position="568"/>
    </location>
</feature>
<sequence>MRAWLLLLAVLATFQTIVRVASTEDISQRFIAAIAPVAAHIPLASASGSGSGRSGSRSVGASTSTALAKAFNPFSEPASFSDSDKSHRSKTNKKPSKSDANRQFNEVHKPRTDQLENSKNKSKQLVNKPNHNKMAVKEQRSHHKKSHHHRSHQPKQASASTESHQSSSIESIFVEEPTLVLDREVASINVPANAKAIIAEQGPSTYSKEALIKDKLKPDPSTLVEIEKSLLSLFNMKRPPKIDRSKIIIPEPMKKLYAEIMGHELDSVNIPKPGLLTKSANTVRSFTHKDSKIDDRFPHHHRFRLHFDVKSIPADEKLKAAELQLTRDALSQQVVASRSSANRTRYQVLVYDITRVGVRGQREPSYLLLDTKTVRLNSTDTVSLDVQPAVDRWLASPQRNYGLLVEVRTVRSLKPAPHHHVRLRRSADEAHERWQHKQPLLFTYTDDGRHKARSIRDVSGGEGGGKGGRNKRQPRRPTRRKNHDDTCRRHSLYVDFSDVGWDDWIVAPLGYDAYYCHGKCPFPLADHFNSTNHAVVQTLVNNMNPGKVPKACCVPTQLDSVAMLYLNDQSTVVLKNYQEMTVVGCGCR</sequence>
<evidence type="ECO:0000250" key="1"/>
<evidence type="ECO:0000255" key="2"/>
<evidence type="ECO:0000256" key="3">
    <source>
        <dbReference type="SAM" id="MobiDB-lite"/>
    </source>
</evidence>
<evidence type="ECO:0000269" key="4">
    <source>
    </source>
</evidence>
<evidence type="ECO:0000269" key="5">
    <source>
    </source>
</evidence>
<evidence type="ECO:0000269" key="6">
    <source>
    </source>
</evidence>
<evidence type="ECO:0000269" key="7">
    <source>
    </source>
</evidence>
<evidence type="ECO:0000269" key="8">
    <source>
    </source>
</evidence>
<evidence type="ECO:0000269" key="9">
    <source>
    </source>
</evidence>
<evidence type="ECO:0000269" key="10">
    <source>
    </source>
</evidence>
<evidence type="ECO:0000269" key="11">
    <source>
    </source>
</evidence>
<evidence type="ECO:0000269" key="12">
    <source>
    </source>
</evidence>
<evidence type="ECO:0000269" key="13">
    <source>
    </source>
</evidence>
<evidence type="ECO:0000269" key="14">
    <source>
    </source>
</evidence>
<evidence type="ECO:0000269" key="15">
    <source>
    </source>
</evidence>
<evidence type="ECO:0000269" key="16">
    <source>
    </source>
</evidence>
<evidence type="ECO:0000269" key="17">
    <source>
    </source>
</evidence>
<evidence type="ECO:0000269" key="18">
    <source>
    </source>
</evidence>
<evidence type="ECO:0000269" key="19">
    <source>
    </source>
</evidence>
<evidence type="ECO:0000269" key="20">
    <source>
    </source>
</evidence>
<evidence type="ECO:0000269" key="21">
    <source>
    </source>
</evidence>
<evidence type="ECO:0000269" key="22">
    <source>
    </source>
</evidence>
<evidence type="ECO:0000269" key="23">
    <source>
    </source>
</evidence>
<evidence type="ECO:0000305" key="24"/>
<reference key="1">
    <citation type="journal article" date="1987" name="Nature">
        <title>A transcript from a Drosophila pattern gene predicts a protein homologous to the transforming growth factor-beta family.</title>
        <authorList>
            <person name="Padgett R.W."/>
            <person name="St Johnston R.D."/>
            <person name="Gelbart W.M."/>
        </authorList>
    </citation>
    <scope>NUCLEOTIDE SEQUENCE [MRNA]</scope>
</reference>
<reference key="2">
    <citation type="journal article" date="1997" name="Genetics">
        <title>Nucleotide variation and conservation at the dpp locus, a gene controlling early development in Drosophila.</title>
        <authorList>
            <person name="Richter B."/>
            <person name="Long M."/>
            <person name="Lewontin R.C."/>
            <person name="Nitasaka E."/>
        </authorList>
    </citation>
    <scope>NUCLEOTIDE SEQUENCE [GENOMIC DNA]</scope>
    <scope>VARIANTS GLY-59 AND MET-121</scope>
    <source>
        <strain>DP CN BW</strain>
    </source>
</reference>
<reference key="3">
    <citation type="journal article" date="2000" name="Science">
        <title>The genome sequence of Drosophila melanogaster.</title>
        <authorList>
            <person name="Adams M.D."/>
            <person name="Celniker S.E."/>
            <person name="Holt R.A."/>
            <person name="Evans C.A."/>
            <person name="Gocayne J.D."/>
            <person name="Amanatides P.G."/>
            <person name="Scherer S.E."/>
            <person name="Li P.W."/>
            <person name="Hoskins R.A."/>
            <person name="Galle R.F."/>
            <person name="George R.A."/>
            <person name="Lewis S.E."/>
            <person name="Richards S."/>
            <person name="Ashburner M."/>
            <person name="Henderson S.N."/>
            <person name="Sutton G.G."/>
            <person name="Wortman J.R."/>
            <person name="Yandell M.D."/>
            <person name="Zhang Q."/>
            <person name="Chen L.X."/>
            <person name="Brandon R.C."/>
            <person name="Rogers Y.-H.C."/>
            <person name="Blazej R.G."/>
            <person name="Champe M."/>
            <person name="Pfeiffer B.D."/>
            <person name="Wan K.H."/>
            <person name="Doyle C."/>
            <person name="Baxter E.G."/>
            <person name="Helt G."/>
            <person name="Nelson C.R."/>
            <person name="Miklos G.L.G."/>
            <person name="Abril J.F."/>
            <person name="Agbayani A."/>
            <person name="An H.-J."/>
            <person name="Andrews-Pfannkoch C."/>
            <person name="Baldwin D."/>
            <person name="Ballew R.M."/>
            <person name="Basu A."/>
            <person name="Baxendale J."/>
            <person name="Bayraktaroglu L."/>
            <person name="Beasley E.M."/>
            <person name="Beeson K.Y."/>
            <person name="Benos P.V."/>
            <person name="Berman B.P."/>
            <person name="Bhandari D."/>
            <person name="Bolshakov S."/>
            <person name="Borkova D."/>
            <person name="Botchan M.R."/>
            <person name="Bouck J."/>
            <person name="Brokstein P."/>
            <person name="Brottier P."/>
            <person name="Burtis K.C."/>
            <person name="Busam D.A."/>
            <person name="Butler H."/>
            <person name="Cadieu E."/>
            <person name="Center A."/>
            <person name="Chandra I."/>
            <person name="Cherry J.M."/>
            <person name="Cawley S."/>
            <person name="Dahlke C."/>
            <person name="Davenport L.B."/>
            <person name="Davies P."/>
            <person name="de Pablos B."/>
            <person name="Delcher A."/>
            <person name="Deng Z."/>
            <person name="Mays A.D."/>
            <person name="Dew I."/>
            <person name="Dietz S.M."/>
            <person name="Dodson K."/>
            <person name="Doup L.E."/>
            <person name="Downes M."/>
            <person name="Dugan-Rocha S."/>
            <person name="Dunkov B.C."/>
            <person name="Dunn P."/>
            <person name="Durbin K.J."/>
            <person name="Evangelista C.C."/>
            <person name="Ferraz C."/>
            <person name="Ferriera S."/>
            <person name="Fleischmann W."/>
            <person name="Fosler C."/>
            <person name="Gabrielian A.E."/>
            <person name="Garg N.S."/>
            <person name="Gelbart W.M."/>
            <person name="Glasser K."/>
            <person name="Glodek A."/>
            <person name="Gong F."/>
            <person name="Gorrell J.H."/>
            <person name="Gu Z."/>
            <person name="Guan P."/>
            <person name="Harris M."/>
            <person name="Harris N.L."/>
            <person name="Harvey D.A."/>
            <person name="Heiman T.J."/>
            <person name="Hernandez J.R."/>
            <person name="Houck J."/>
            <person name="Hostin D."/>
            <person name="Houston K.A."/>
            <person name="Howland T.J."/>
            <person name="Wei M.-H."/>
            <person name="Ibegwam C."/>
            <person name="Jalali M."/>
            <person name="Kalush F."/>
            <person name="Karpen G.H."/>
            <person name="Ke Z."/>
            <person name="Kennison J.A."/>
            <person name="Ketchum K.A."/>
            <person name="Kimmel B.E."/>
            <person name="Kodira C.D."/>
            <person name="Kraft C.L."/>
            <person name="Kravitz S."/>
            <person name="Kulp D."/>
            <person name="Lai Z."/>
            <person name="Lasko P."/>
            <person name="Lei Y."/>
            <person name="Levitsky A.A."/>
            <person name="Li J.H."/>
            <person name="Li Z."/>
            <person name="Liang Y."/>
            <person name="Lin X."/>
            <person name="Liu X."/>
            <person name="Mattei B."/>
            <person name="McIntosh T.C."/>
            <person name="McLeod M.P."/>
            <person name="McPherson D."/>
            <person name="Merkulov G."/>
            <person name="Milshina N.V."/>
            <person name="Mobarry C."/>
            <person name="Morris J."/>
            <person name="Moshrefi A."/>
            <person name="Mount S.M."/>
            <person name="Moy M."/>
            <person name="Murphy B."/>
            <person name="Murphy L."/>
            <person name="Muzny D.M."/>
            <person name="Nelson D.L."/>
            <person name="Nelson D.R."/>
            <person name="Nelson K.A."/>
            <person name="Nixon K."/>
            <person name="Nusskern D.R."/>
            <person name="Pacleb J.M."/>
            <person name="Palazzolo M."/>
            <person name="Pittman G.S."/>
            <person name="Pan S."/>
            <person name="Pollard J."/>
            <person name="Puri V."/>
            <person name="Reese M.G."/>
            <person name="Reinert K."/>
            <person name="Remington K."/>
            <person name="Saunders R.D.C."/>
            <person name="Scheeler F."/>
            <person name="Shen H."/>
            <person name="Shue B.C."/>
            <person name="Siden-Kiamos I."/>
            <person name="Simpson M."/>
            <person name="Skupski M.P."/>
            <person name="Smith T.J."/>
            <person name="Spier E."/>
            <person name="Spradling A.C."/>
            <person name="Stapleton M."/>
            <person name="Strong R."/>
            <person name="Sun E."/>
            <person name="Svirskas R."/>
            <person name="Tector C."/>
            <person name="Turner R."/>
            <person name="Venter E."/>
            <person name="Wang A.H."/>
            <person name="Wang X."/>
            <person name="Wang Z.-Y."/>
            <person name="Wassarman D.A."/>
            <person name="Weinstock G.M."/>
            <person name="Weissenbach J."/>
            <person name="Williams S.M."/>
            <person name="Woodage T."/>
            <person name="Worley K.C."/>
            <person name="Wu D."/>
            <person name="Yang S."/>
            <person name="Yao Q.A."/>
            <person name="Ye J."/>
            <person name="Yeh R.-F."/>
            <person name="Zaveri J.S."/>
            <person name="Zhan M."/>
            <person name="Zhang G."/>
            <person name="Zhao Q."/>
            <person name="Zheng L."/>
            <person name="Zheng X.H."/>
            <person name="Zhong F.N."/>
            <person name="Zhong W."/>
            <person name="Zhou X."/>
            <person name="Zhu S.C."/>
            <person name="Zhu X."/>
            <person name="Smith H.O."/>
            <person name="Gibbs R.A."/>
            <person name="Myers E.W."/>
            <person name="Rubin G.M."/>
            <person name="Venter J.C."/>
        </authorList>
    </citation>
    <scope>NUCLEOTIDE SEQUENCE [LARGE SCALE GENOMIC DNA]</scope>
    <source>
        <strain>Berkeley</strain>
    </source>
</reference>
<reference key="4">
    <citation type="journal article" date="2002" name="Genome Biol.">
        <title>Annotation of the Drosophila melanogaster euchromatic genome: a systematic review.</title>
        <authorList>
            <person name="Misra S."/>
            <person name="Crosby M.A."/>
            <person name="Mungall C.J."/>
            <person name="Matthews B.B."/>
            <person name="Campbell K.S."/>
            <person name="Hradecky P."/>
            <person name="Huang Y."/>
            <person name="Kaminker J.S."/>
            <person name="Millburn G.H."/>
            <person name="Prochnik S.E."/>
            <person name="Smith C.D."/>
            <person name="Tupy J.L."/>
            <person name="Whitfield E.J."/>
            <person name="Bayraktaroglu L."/>
            <person name="Berman B.P."/>
            <person name="Bettencourt B.R."/>
            <person name="Celniker S.E."/>
            <person name="de Grey A.D.N.J."/>
            <person name="Drysdale R.A."/>
            <person name="Harris N.L."/>
            <person name="Richter J."/>
            <person name="Russo S."/>
            <person name="Schroeder A.J."/>
            <person name="Shu S.Q."/>
            <person name="Stapleton M."/>
            <person name="Yamada C."/>
            <person name="Ashburner M."/>
            <person name="Gelbart W.M."/>
            <person name="Rubin G.M."/>
            <person name="Lewis S.E."/>
        </authorList>
    </citation>
    <scope>GENOME REANNOTATION</scope>
    <source>
        <strain>Berkeley</strain>
    </source>
</reference>
<reference key="5">
    <citation type="submission" date="2004-08" db="EMBL/GenBank/DDBJ databases">
        <authorList>
            <person name="Stapleton M."/>
            <person name="Carlson J.W."/>
            <person name="Chavez C."/>
            <person name="Frise E."/>
            <person name="George R.A."/>
            <person name="Pacleb J.M."/>
            <person name="Park S."/>
            <person name="Wan K.H."/>
            <person name="Yu C."/>
            <person name="Rubin G.M."/>
            <person name="Celniker S.E."/>
        </authorList>
    </citation>
    <scope>NUCLEOTIDE SEQUENCE [LARGE SCALE MRNA]</scope>
    <source>
        <strain>Berkeley</strain>
        <tissue>Embryo</tissue>
    </source>
</reference>
<reference key="6">
    <citation type="journal article" date="2003" name="Genetics">
        <title>Evidence of a high rate of selective sweeps in African Drosophila melanogaster.</title>
        <authorList>
            <person name="Mousset S."/>
            <person name="Brazier L."/>
            <person name="Cariou M.L."/>
            <person name="Chartois F."/>
            <person name="Depaulis F."/>
            <person name="Veuille M."/>
        </authorList>
    </citation>
    <scope>NUCLEOTIDE SEQUENCE [GENOMIC DNA] OF 291-509</scope>
    <scope>VARIANT ALA-439</scope>
</reference>
<reference key="7">
    <citation type="journal article" date="1990" name="Mol. Cell. Biol.">
        <title>Biochemical characterization of the Drosophila dpp protein, a member of the transforming growth factor beta family of growth factors.</title>
        <authorList>
            <person name="Panganiban G.E.F."/>
            <person name="Rashka K.E."/>
            <person name="Neitzel M.D."/>
            <person name="Hoffmann F.M."/>
        </authorList>
    </citation>
    <scope>PROTEIN SEQUENCE OF 457-476</scope>
    <scope>FUNCTION</scope>
    <scope>SUBCELLULAR LOCATION</scope>
    <scope>PROTEOLYTIC CLEAVAGE AT ARG-456</scope>
</reference>
<reference key="8">
    <citation type="journal article" date="1987" name="Genes Dev.">
        <title>The decapentaplegic gene is required for dorsal-ventral patterning of the Drosophila embryo.</title>
        <authorList>
            <person name="Irish V.F."/>
            <person name="Gelbart W.M."/>
        </authorList>
    </citation>
    <scope>FUNCTION</scope>
</reference>
<reference key="9">
    <citation type="journal article" date="1993" name="Cell">
        <title>The TGF beta homolog dpp and the segment polarity gene hedgehog are required for propagation of a morphogenetic wave in the Drosophila retina.</title>
        <authorList>
            <person name="Heberlein U."/>
            <person name="Wolff T."/>
            <person name="Rubin G.M."/>
        </authorList>
    </citation>
    <scope>FUNCTION</scope>
</reference>
<reference key="10">
    <citation type="journal article" date="1995" name="Development">
        <title>Analysis of the genetic hierarchy guiding wing vein development in Drosophila.</title>
        <authorList>
            <person name="Sturtevant M.A."/>
            <person name="Bier E."/>
        </authorList>
    </citation>
    <scope>FUNCTION</scope>
</reference>
<reference key="11">
    <citation type="journal article" date="1995" name="Nature">
        <title>Induction of visceral and cardiac mesoderm by ectodermal Dpp in the early Drosophila embryo.</title>
        <authorList>
            <person name="Frasch M."/>
        </authorList>
    </citation>
    <scope>FUNCTION</scope>
</reference>
<reference key="12">
    <citation type="journal article" date="1997" name="Development">
        <title>DPP controls tracheal cell migration along the dorsoventral body axis of the Drosophila embryo.</title>
        <authorList>
            <person name="Vincent S."/>
            <person name="Ruberte E."/>
            <person name="Grieder N.C."/>
            <person name="Chen C.-K."/>
            <person name="Haerry T."/>
            <person name="Schuh R."/>
            <person name="Affolter M."/>
        </authorList>
    </citation>
    <scope>FUNCTION</scope>
</reference>
<reference key="13">
    <citation type="journal article" date="1998" name="Cell">
        <title>decapentaplegic is essential for the maintenance and division of germline stem cells in the Drosophila ovary.</title>
        <authorList>
            <person name="Xie T."/>
            <person name="Spradling A.C."/>
        </authorList>
    </citation>
    <scope>FUNCTION</scope>
</reference>
<reference key="14">
    <citation type="journal article" date="1998" name="Development">
        <title>TGF-beta/BMP superfamily members, Gbb-60A and Dpp, cooperate to provide pattern information and establish cell identity in the Drosophila wing.</title>
        <authorList>
            <person name="Khalsa O."/>
            <person name="Yoon J.-W."/>
            <person name="Torres-Schumann S."/>
            <person name="Wharton K.A."/>
        </authorList>
    </citation>
    <scope>FUNCTION</scope>
</reference>
<reference key="15">
    <citation type="journal article" date="1999" name="Mech. Dev.">
        <title>Dpp and Notch specify the fusion cell fate in the dorsal branches of the Drosophila trachea.</title>
        <authorList>
            <person name="Steneberg P."/>
            <person name="Hemphala J."/>
            <person name="Samakovlis C."/>
        </authorList>
    </citation>
    <scope>FUNCTION</scope>
</reference>
<reference key="16">
    <citation type="journal article" date="2000" name="Cell">
        <title>Dpp gradient formation in the Drosophila wing imaginal disc.</title>
        <authorList>
            <person name="Teleman A.A."/>
            <person name="Cohen S.M."/>
        </authorList>
    </citation>
    <scope>FUNCTION</scope>
    <scope>SUBCELLULAR LOCATION</scope>
    <scope>TISSUE SPECIFICITY</scope>
</reference>
<reference key="17">
    <citation type="journal article" date="2000" name="Cell">
        <title>Gradient formation of the TGF-beta homolog Dpp.</title>
        <authorList>
            <person name="Entchev E.V."/>
            <person name="Schwabedissen A."/>
            <person name="Gonzalez-Gaitan M."/>
        </authorList>
    </citation>
    <scope>SUBCELLULAR LOCATION</scope>
    <scope>TISSUE SPECIFICITY</scope>
</reference>
<reference key="18">
    <citation type="journal article" date="2000" name="Development">
        <title>sog and dpp exert opposing maternal functions to modify toll signaling and pattern the dorsoventral axis of the Drosophila embryo.</title>
        <authorList>
            <person name="Araujo H."/>
            <person name="Bier E."/>
        </authorList>
    </citation>
    <scope>FUNCTION</scope>
    <scope>DEVELOPMENTAL STAGE</scope>
</reference>
<reference key="19">
    <citation type="journal article" date="2001" name="EMBO J.">
        <title>Nuclear interpretation of Dpp signaling in Drosophila.</title>
        <authorList>
            <person name="Affolter M."/>
            <person name="Marty T."/>
            <person name="Vigano M.A."/>
            <person name="Jazwinska A."/>
        </authorList>
    </citation>
    <scope>REVIEW</scope>
</reference>
<reference key="20">
    <citation type="journal article" date="2001" name="Mech. Dev.">
        <title>Regulation of pattern formation in the Drosophila hindgut by wg, hh, dpp, and en.</title>
        <authorList>
            <person name="Takashima S."/>
            <person name="Murakami R."/>
        </authorList>
    </citation>
    <scope>FUNCTION</scope>
    <scope>TISSUE SPECIFICITY</scope>
</reference>
<reference key="21">
    <citation type="journal article" date="2001" name="Nature">
        <title>Twisted gastrulation is a conserved extracellular BMP antagonist.</title>
        <authorList>
            <person name="Ross J.J."/>
            <person name="Shimmi O."/>
            <person name="Vilmos P."/>
            <person name="Petryk A."/>
            <person name="Kim H."/>
            <person name="Gaudenz K."/>
            <person name="Hermanson S."/>
            <person name="Ekker S.C."/>
            <person name="O'Connor M.B."/>
            <person name="Marsh J.L."/>
        </authorList>
    </citation>
    <scope>FUNCTION</scope>
    <scope>INTERACTION WITH SOG AND TSG</scope>
</reference>
<reference key="22">
    <citation type="journal article" date="2002" name="Development">
        <title>Dpp signalling is a key effector of the wing-body wall subdivision of the Drosophila mesothorax.</title>
        <authorList>
            <person name="Cavodeassi F."/>
            <person name="Rodriguez I."/>
            <person name="Modolell J."/>
        </authorList>
    </citation>
    <scope>FUNCTION</scope>
</reference>
<reference key="23">
    <citation type="journal article" date="2005" name="Cell">
        <title>Facilitated transport of a Dpp/Scw heterodimer by Sog/Tsg leads to robust patterning of the Drosophila blastoderm embryo.</title>
        <authorList>
            <person name="Shimmi O."/>
            <person name="Umulis D."/>
            <person name="Othmer H."/>
            <person name="O'Connor M.B."/>
        </authorList>
    </citation>
    <scope>FUNCTION</scope>
    <scope>SUBUNIT</scope>
    <scope>TISSUE SPECIFICITY</scope>
</reference>
<reference key="24">
    <citation type="journal article" date="2005" name="Nat. Cell Biol.">
        <title>Dpp gets in shape.</title>
        <authorList>
            <person name="Schuldt A."/>
        </authorList>
    </citation>
    <scope>REVIEW</scope>
</reference>
<reference key="25">
    <citation type="journal article" date="2022" name="Dev. Biol.">
        <title>The feedback regulator Nord controls Dpp/BMP signaling via extracellular interaction with Dally in the Drosophila wing.</title>
        <authorList>
            <person name="Akiyama T."/>
            <person name="Seidel C.W."/>
            <person name="Gibson M.C."/>
        </authorList>
    </citation>
    <scope>DEVELOPMENTAL STAGE</scope>
</reference>
<reference key="26">
    <citation type="journal article" date="2022" name="Elife">
        <title>The NDNF-like factor Nord is a Hedgehog-induced extracellular BMP modulator that regulates Drosophila wing patterning and growth.</title>
        <authorList>
            <person name="Yang S."/>
            <person name="Wu X."/>
            <person name="Daoutidou E.I."/>
            <person name="Zhang Y."/>
            <person name="Shimell M."/>
            <person name="Chuang K.H."/>
            <person name="Peterson A.J."/>
            <person name="O'Connor M.B."/>
            <person name="Zheng X."/>
        </authorList>
    </citation>
    <scope>SUBCELLULAR LOCATION</scope>
    <scope>INTERACTION WITH NORD AND GBB</scope>
    <scope>DEVELOPMENTAL STAGE</scope>
</reference>
<gene>
    <name type="primary">dpp</name>
    <name type="ORF">CG9885</name>
</gene>
<proteinExistence type="evidence at protein level"/>
<name>DECA_DROME</name>
<protein>
    <recommendedName>
        <fullName>Protein decapentaplegic</fullName>
        <shortName>Protein DPP-C</shortName>
    </recommendedName>
</protein>
<dbReference type="EMBL" id="M30116">
    <property type="protein sequence ID" value="AAA28482.1"/>
    <property type="molecule type" value="mRNA"/>
</dbReference>
<dbReference type="EMBL" id="U63857">
    <property type="protein sequence ID" value="AAC47552.1"/>
    <property type="molecule type" value="Genomic_DNA"/>
</dbReference>
<dbReference type="EMBL" id="AE014134">
    <property type="protein sequence ID" value="AAF51250.1"/>
    <property type="molecule type" value="Genomic_DNA"/>
</dbReference>
<dbReference type="EMBL" id="AE014134">
    <property type="protein sequence ID" value="AAN10431.1"/>
    <property type="molecule type" value="Genomic_DNA"/>
</dbReference>
<dbReference type="EMBL" id="AE014134">
    <property type="protein sequence ID" value="AAN10432.1"/>
    <property type="molecule type" value="Genomic_DNA"/>
</dbReference>
<dbReference type="EMBL" id="AE014134">
    <property type="protein sequence ID" value="AAN10434.1"/>
    <property type="molecule type" value="Genomic_DNA"/>
</dbReference>
<dbReference type="EMBL" id="BT015227">
    <property type="protein sequence ID" value="AAT94456.1"/>
    <property type="molecule type" value="mRNA"/>
</dbReference>
<dbReference type="EMBL" id="AF459545">
    <property type="protein sequence ID" value="AAN61361.1"/>
    <property type="molecule type" value="Genomic_DNA"/>
</dbReference>
<dbReference type="EMBL" id="AF459546">
    <property type="protein sequence ID" value="AAN61362.1"/>
    <property type="molecule type" value="Genomic_DNA"/>
</dbReference>
<dbReference type="EMBL" id="AF459547">
    <property type="protein sequence ID" value="AAN61363.1"/>
    <property type="molecule type" value="Genomic_DNA"/>
</dbReference>
<dbReference type="EMBL" id="AF459548">
    <property type="protein sequence ID" value="AAN61364.1"/>
    <property type="molecule type" value="Genomic_DNA"/>
</dbReference>
<dbReference type="EMBL" id="AF459549">
    <property type="protein sequence ID" value="AAN61365.1"/>
    <property type="molecule type" value="Genomic_DNA"/>
</dbReference>
<dbReference type="EMBL" id="AF459550">
    <property type="protein sequence ID" value="AAN61366.1"/>
    <property type="molecule type" value="Genomic_DNA"/>
</dbReference>
<dbReference type="EMBL" id="AF459551">
    <property type="protein sequence ID" value="AAN61367.1"/>
    <property type="molecule type" value="Genomic_DNA"/>
</dbReference>
<dbReference type="EMBL" id="AF459552">
    <property type="protein sequence ID" value="AAN61368.1"/>
    <property type="molecule type" value="Genomic_DNA"/>
</dbReference>
<dbReference type="EMBL" id="AF459553">
    <property type="protein sequence ID" value="AAN61369.1"/>
    <property type="molecule type" value="Genomic_DNA"/>
</dbReference>
<dbReference type="EMBL" id="AF459554">
    <property type="protein sequence ID" value="AAN61370.1"/>
    <property type="molecule type" value="Genomic_DNA"/>
</dbReference>
<dbReference type="EMBL" id="AF459555">
    <property type="protein sequence ID" value="AAN61371.1"/>
    <property type="molecule type" value="Genomic_DNA"/>
</dbReference>
<dbReference type="EMBL" id="AF459556">
    <property type="protein sequence ID" value="AAN61372.1"/>
    <property type="molecule type" value="Genomic_DNA"/>
</dbReference>
<dbReference type="EMBL" id="AF459557">
    <property type="protein sequence ID" value="AAN61373.1"/>
    <property type="molecule type" value="Genomic_DNA"/>
</dbReference>
<dbReference type="EMBL" id="AF459558">
    <property type="protein sequence ID" value="AAN61374.1"/>
    <property type="molecule type" value="Genomic_DNA"/>
</dbReference>
<dbReference type="EMBL" id="AF459559">
    <property type="protein sequence ID" value="AAN61375.1"/>
    <property type="molecule type" value="Genomic_DNA"/>
</dbReference>
<dbReference type="EMBL" id="AF459560">
    <property type="protein sequence ID" value="AAN61376.1"/>
    <property type="molecule type" value="Genomic_DNA"/>
</dbReference>
<dbReference type="EMBL" id="AF459561">
    <property type="protein sequence ID" value="AAN61377.1"/>
    <property type="molecule type" value="Genomic_DNA"/>
</dbReference>
<dbReference type="EMBL" id="AF459562">
    <property type="protein sequence ID" value="AAN61378.1"/>
    <property type="molecule type" value="Genomic_DNA"/>
</dbReference>
<dbReference type="EMBL" id="AF459563">
    <property type="protein sequence ID" value="AAN61379.1"/>
    <property type="molecule type" value="Genomic_DNA"/>
</dbReference>
<dbReference type="EMBL" id="AF459564">
    <property type="protein sequence ID" value="AAN61380.1"/>
    <property type="molecule type" value="Genomic_DNA"/>
</dbReference>
<dbReference type="PIR" id="A26158">
    <property type="entry name" value="A26158"/>
</dbReference>
<dbReference type="RefSeq" id="NP_477311.1">
    <property type="nucleotide sequence ID" value="NM_057963.5"/>
</dbReference>
<dbReference type="RefSeq" id="NP_722810.1">
    <property type="nucleotide sequence ID" value="NM_164485.2"/>
</dbReference>
<dbReference type="RefSeq" id="NP_722811.1">
    <property type="nucleotide sequence ID" value="NM_164486.2"/>
</dbReference>
<dbReference type="RefSeq" id="NP_722813.1">
    <property type="nucleotide sequence ID" value="NM_164488.2"/>
</dbReference>
<dbReference type="SMR" id="P07713"/>
<dbReference type="BioGRID" id="59659">
    <property type="interactions" value="101"/>
</dbReference>
<dbReference type="DIP" id="DIP-19N"/>
<dbReference type="FunCoup" id="P07713">
    <property type="interactions" value="175"/>
</dbReference>
<dbReference type="IntAct" id="P07713">
    <property type="interactions" value="3"/>
</dbReference>
<dbReference type="STRING" id="7227.FBpp0077453"/>
<dbReference type="GlyCosmos" id="P07713">
    <property type="glycosylation" value="4 sites, No reported glycans"/>
</dbReference>
<dbReference type="GlyGen" id="P07713">
    <property type="glycosylation" value="4 sites"/>
</dbReference>
<dbReference type="PaxDb" id="7227-FBpp0077451"/>
<dbReference type="EnsemblMetazoa" id="FBtr0077771">
    <property type="protein sequence ID" value="FBpp0077451"/>
    <property type="gene ID" value="FBgn0000490"/>
</dbReference>
<dbReference type="EnsemblMetazoa" id="FBtr0077772">
    <property type="protein sequence ID" value="FBpp0077452"/>
    <property type="gene ID" value="FBgn0000490"/>
</dbReference>
<dbReference type="EnsemblMetazoa" id="FBtr0077773">
    <property type="protein sequence ID" value="FBpp0077453"/>
    <property type="gene ID" value="FBgn0000490"/>
</dbReference>
<dbReference type="EnsemblMetazoa" id="FBtr0077775">
    <property type="protein sequence ID" value="FBpp0077455"/>
    <property type="gene ID" value="FBgn0000490"/>
</dbReference>
<dbReference type="GeneID" id="33432"/>
<dbReference type="KEGG" id="dme:Dmel_CG9885"/>
<dbReference type="UCSC" id="CG9885-RB">
    <property type="organism name" value="d. melanogaster"/>
</dbReference>
<dbReference type="AGR" id="FB:FBgn0000490"/>
<dbReference type="CTD" id="33432"/>
<dbReference type="FlyBase" id="FBgn0000490">
    <property type="gene designation" value="dpp"/>
</dbReference>
<dbReference type="VEuPathDB" id="VectorBase:FBgn0000490"/>
<dbReference type="eggNOG" id="KOG3900">
    <property type="taxonomic scope" value="Eukaryota"/>
</dbReference>
<dbReference type="GeneTree" id="ENSGT00940000174461"/>
<dbReference type="HOGENOM" id="CLU_020515_4_2_1"/>
<dbReference type="InParanoid" id="P07713"/>
<dbReference type="OMA" id="FQDVGWS"/>
<dbReference type="OrthoDB" id="5987191at2759"/>
<dbReference type="PhylomeDB" id="P07713"/>
<dbReference type="Reactome" id="R-DME-114608">
    <property type="pathway name" value="Platelet degranulation"/>
</dbReference>
<dbReference type="Reactome" id="R-DME-1502540">
    <property type="pathway name" value="Signaling by Activin"/>
</dbReference>
<dbReference type="Reactome" id="R-DME-201451">
    <property type="pathway name" value="Signaling by BMP"/>
</dbReference>
<dbReference type="Reactome" id="R-DME-2129379">
    <property type="pathway name" value="Molecules associated with elastic fibres"/>
</dbReference>
<dbReference type="Reactome" id="R-DME-2173788">
    <property type="pathway name" value="Downregulation of TGF-beta receptor signaling"/>
</dbReference>
<dbReference type="Reactome" id="R-DME-2173789">
    <property type="pathway name" value="TGF-beta receptor signaling activates SMADs"/>
</dbReference>
<dbReference type="Reactome" id="R-DME-2173791">
    <property type="pathway name" value="TGF-beta receptor signaling in EMT (epithelial to mesenchymal transition)"/>
</dbReference>
<dbReference type="Reactome" id="R-DME-3000170">
    <property type="pathway name" value="Syndecan interactions"/>
</dbReference>
<dbReference type="Reactome" id="R-DME-381426">
    <property type="pathway name" value="Regulation of Insulin-like Growth Factor (IGF) transport and uptake by Insulin-like Growth Factor Binding Proteins (IGFBPs)"/>
</dbReference>
<dbReference type="Reactome" id="R-DME-8941855">
    <property type="pathway name" value="RUNX3 regulates CDKN1A transcription"/>
</dbReference>
<dbReference type="Reactome" id="R-DME-8941858">
    <property type="pathway name" value="Regulation of RUNX3 expression and activity"/>
</dbReference>
<dbReference type="Reactome" id="R-DME-8951936">
    <property type="pathway name" value="RUNX3 regulates p14-ARF"/>
</dbReference>
<dbReference type="Reactome" id="R-DME-8957275">
    <property type="pathway name" value="Post-translational protein phosphorylation"/>
</dbReference>
<dbReference type="Reactome" id="R-DME-9839389">
    <property type="pathway name" value="TGFBR3 regulates TGF-beta signaling"/>
</dbReference>
<dbReference type="SignaLink" id="P07713"/>
<dbReference type="BioGRID-ORCS" id="33432">
    <property type="hits" value="0 hits in 3 CRISPR screens"/>
</dbReference>
<dbReference type="GenomeRNAi" id="33432"/>
<dbReference type="PRO" id="PR:P07713"/>
<dbReference type="Proteomes" id="UP000000803">
    <property type="component" value="Chromosome 2L"/>
</dbReference>
<dbReference type="Bgee" id="FBgn0000490">
    <property type="expression patterns" value="Expressed in adult tracheocyte (Drosophila) in Malpighian tubule and 153 other cell types or tissues"/>
</dbReference>
<dbReference type="GO" id="GO:0031252">
    <property type="term" value="C:cell leading edge"/>
    <property type="evidence" value="ECO:0000314"/>
    <property type="project" value="UniProtKB"/>
</dbReference>
<dbReference type="GO" id="GO:0098898">
    <property type="term" value="C:dense core granule lumen"/>
    <property type="evidence" value="ECO:0000314"/>
    <property type="project" value="FlyBase"/>
</dbReference>
<dbReference type="GO" id="GO:0005615">
    <property type="term" value="C:extracellular space"/>
    <property type="evidence" value="ECO:0000314"/>
    <property type="project" value="FlyBase"/>
</dbReference>
<dbReference type="GO" id="GO:0070700">
    <property type="term" value="F:BMP receptor binding"/>
    <property type="evidence" value="ECO:0000353"/>
    <property type="project" value="FlyBase"/>
</dbReference>
<dbReference type="GO" id="GO:0005518">
    <property type="term" value="F:collagen binding"/>
    <property type="evidence" value="ECO:0000314"/>
    <property type="project" value="FlyBase"/>
</dbReference>
<dbReference type="GO" id="GO:0005125">
    <property type="term" value="F:cytokine activity"/>
    <property type="evidence" value="ECO:0000318"/>
    <property type="project" value="GO_Central"/>
</dbReference>
<dbReference type="GO" id="GO:0008083">
    <property type="term" value="F:growth factor activity"/>
    <property type="evidence" value="ECO:0007669"/>
    <property type="project" value="UniProtKB-KW"/>
</dbReference>
<dbReference type="GO" id="GO:0008201">
    <property type="term" value="F:heparin binding"/>
    <property type="evidence" value="ECO:0000314"/>
    <property type="project" value="FlyBase"/>
</dbReference>
<dbReference type="GO" id="GO:0016015">
    <property type="term" value="F:morphogen activity"/>
    <property type="evidence" value="ECO:0000314"/>
    <property type="project" value="FlyBase"/>
</dbReference>
<dbReference type="GO" id="GO:0046982">
    <property type="term" value="F:protein heterodimerization activity"/>
    <property type="evidence" value="ECO:0000353"/>
    <property type="project" value="UniProtKB"/>
</dbReference>
<dbReference type="GO" id="GO:0042803">
    <property type="term" value="F:protein homodimerization activity"/>
    <property type="evidence" value="ECO:0000314"/>
    <property type="project" value="FlyBase"/>
</dbReference>
<dbReference type="GO" id="GO:0043539">
    <property type="term" value="F:protein serine/threonine kinase activator activity"/>
    <property type="evidence" value="ECO:0000314"/>
    <property type="project" value="FlyBase"/>
</dbReference>
<dbReference type="GO" id="GO:0048018">
    <property type="term" value="F:receptor ligand activity"/>
    <property type="evidence" value="ECO:0000314"/>
    <property type="project" value="FlyBase"/>
</dbReference>
<dbReference type="GO" id="GO:0007378">
    <property type="term" value="P:amnioserosa formation"/>
    <property type="evidence" value="ECO:0000315"/>
    <property type="project" value="FlyBase"/>
</dbReference>
<dbReference type="GO" id="GO:0061327">
    <property type="term" value="P:anterior Malpighian tubule development"/>
    <property type="evidence" value="ECO:0000315"/>
    <property type="project" value="FlyBase"/>
</dbReference>
<dbReference type="GO" id="GO:0030509">
    <property type="term" value="P:BMP signaling pathway"/>
    <property type="evidence" value="ECO:0000314"/>
    <property type="project" value="FlyBase"/>
</dbReference>
<dbReference type="GO" id="GO:0010002">
    <property type="term" value="P:cardioblast differentiation"/>
    <property type="evidence" value="ECO:0000315"/>
    <property type="project" value="FlyBase"/>
</dbReference>
<dbReference type="GO" id="GO:0061352">
    <property type="term" value="P:cell chemotaxis involved in Malpighian tubule morphogenesis"/>
    <property type="evidence" value="ECO:0000315"/>
    <property type="project" value="FlyBase"/>
</dbReference>
<dbReference type="GO" id="GO:0007304">
    <property type="term" value="P:chorion-containing eggshell formation"/>
    <property type="evidence" value="ECO:0000315"/>
    <property type="project" value="FlyBase"/>
</dbReference>
<dbReference type="GO" id="GO:0001745">
    <property type="term" value="P:compound eye morphogenesis"/>
    <property type="evidence" value="ECO:0000315"/>
    <property type="project" value="FlyBase"/>
</dbReference>
<dbReference type="GO" id="GO:0046843">
    <property type="term" value="P:dorsal appendage formation"/>
    <property type="evidence" value="ECO:0000315"/>
    <property type="project" value="FlyBase"/>
</dbReference>
<dbReference type="GO" id="GO:0007391">
    <property type="term" value="P:dorsal closure"/>
    <property type="evidence" value="ECO:0000316"/>
    <property type="project" value="FlyBase"/>
</dbReference>
<dbReference type="GO" id="GO:0009950">
    <property type="term" value="P:dorsal/ventral axis specification"/>
    <property type="evidence" value="ECO:0000315"/>
    <property type="project" value="UniProtKB"/>
</dbReference>
<dbReference type="GO" id="GO:0009953">
    <property type="term" value="P:dorsal/ventral pattern formation"/>
    <property type="evidence" value="ECO:0000315"/>
    <property type="project" value="FlyBase"/>
</dbReference>
<dbReference type="GO" id="GO:0001715">
    <property type="term" value="P:ectodermal cell fate specification"/>
    <property type="evidence" value="ECO:0000315"/>
    <property type="project" value="FlyBase"/>
</dbReference>
<dbReference type="GO" id="GO:0048619">
    <property type="term" value="P:embryonic hindgut morphogenesis"/>
    <property type="evidence" value="ECO:0000315"/>
    <property type="project" value="UniProtKB"/>
</dbReference>
<dbReference type="GO" id="GO:0007427">
    <property type="term" value="P:epithelial cell migration, open tracheal system"/>
    <property type="evidence" value="ECO:0000315"/>
    <property type="project" value="UniProtKB"/>
</dbReference>
<dbReference type="GO" id="GO:0035214">
    <property type="term" value="P:eye-antennal disc development"/>
    <property type="evidence" value="ECO:0000315"/>
    <property type="project" value="FlyBase"/>
</dbReference>
<dbReference type="GO" id="GO:0007455">
    <property type="term" value="P:eye-antennal disc morphogenesis"/>
    <property type="evidence" value="ECO:0000315"/>
    <property type="project" value="FlyBase"/>
</dbReference>
<dbReference type="GO" id="GO:0036099">
    <property type="term" value="P:female germ-line stem cell population maintenance"/>
    <property type="evidence" value="ECO:0000315"/>
    <property type="project" value="FlyBase"/>
</dbReference>
<dbReference type="GO" id="GO:0030707">
    <property type="term" value="P:follicle cell of egg chamber development"/>
    <property type="evidence" value="ECO:0000315"/>
    <property type="project" value="FlyBase"/>
</dbReference>
<dbReference type="GO" id="GO:0035156">
    <property type="term" value="P:fusion cell fate specification"/>
    <property type="evidence" value="ECO:0000315"/>
    <property type="project" value="UniProtKB"/>
</dbReference>
<dbReference type="GO" id="GO:0035224">
    <property type="term" value="P:genital disc anterior/posterior pattern formation"/>
    <property type="evidence" value="ECO:0000270"/>
    <property type="project" value="FlyBase"/>
</dbReference>
<dbReference type="GO" id="GO:0035215">
    <property type="term" value="P:genital disc development"/>
    <property type="evidence" value="ECO:0000315"/>
    <property type="project" value="FlyBase"/>
</dbReference>
<dbReference type="GO" id="GO:0035263">
    <property type="term" value="P:genital disc sexually dimorphic development"/>
    <property type="evidence" value="ECO:0000315"/>
    <property type="project" value="FlyBase"/>
</dbReference>
<dbReference type="GO" id="GO:0007281">
    <property type="term" value="P:germ cell development"/>
    <property type="evidence" value="ECO:0000315"/>
    <property type="project" value="FlyBase"/>
</dbReference>
<dbReference type="GO" id="GO:0008354">
    <property type="term" value="P:germ cell migration"/>
    <property type="evidence" value="ECO:0000315"/>
    <property type="project" value="FlyBase"/>
</dbReference>
<dbReference type="GO" id="GO:0042078">
    <property type="term" value="P:germ-line stem cell division"/>
    <property type="evidence" value="ECO:0000315"/>
    <property type="project" value="FlyBase"/>
</dbReference>
<dbReference type="GO" id="GO:0030718">
    <property type="term" value="P:germ-line stem cell population maintenance"/>
    <property type="evidence" value="ECO:0000315"/>
    <property type="project" value="FlyBase"/>
</dbReference>
<dbReference type="GO" id="GO:0060323">
    <property type="term" value="P:head morphogenesis"/>
    <property type="evidence" value="ECO:0000315"/>
    <property type="project" value="FlyBase"/>
</dbReference>
<dbReference type="GO" id="GO:0007507">
    <property type="term" value="P:heart development"/>
    <property type="evidence" value="ECO:0000315"/>
    <property type="project" value="UniProtKB"/>
</dbReference>
<dbReference type="GO" id="GO:0007516">
    <property type="term" value="P:hemocyte development"/>
    <property type="evidence" value="ECO:0000315"/>
    <property type="project" value="FlyBase"/>
</dbReference>
<dbReference type="GO" id="GO:0007442">
    <property type="term" value="P:hindgut morphogenesis"/>
    <property type="evidence" value="ECO:0000315"/>
    <property type="project" value="FlyBase"/>
</dbReference>
<dbReference type="GO" id="GO:0007444">
    <property type="term" value="P:imaginal disc development"/>
    <property type="evidence" value="ECO:0000315"/>
    <property type="project" value="FlyBase"/>
</dbReference>
<dbReference type="GO" id="GO:0046529">
    <property type="term" value="P:imaginal disc fusion, thorax closure"/>
    <property type="evidence" value="ECO:0000315"/>
    <property type="project" value="FlyBase"/>
</dbReference>
<dbReference type="GO" id="GO:0007476">
    <property type="term" value="P:imaginal disc-derived wing morphogenesis"/>
    <property type="evidence" value="ECO:0000315"/>
    <property type="project" value="FlyBase"/>
</dbReference>
<dbReference type="GO" id="GO:0008586">
    <property type="term" value="P:imaginal disc-derived wing vein morphogenesis"/>
    <property type="evidence" value="ECO:0000315"/>
    <property type="project" value="FlyBase"/>
</dbReference>
<dbReference type="GO" id="GO:0007474">
    <property type="term" value="P:imaginal disc-derived wing vein specification"/>
    <property type="evidence" value="ECO:0000315"/>
    <property type="project" value="FlyBase"/>
</dbReference>
<dbReference type="GO" id="GO:0036335">
    <property type="term" value="P:intestinal stem cell homeostasis"/>
    <property type="evidence" value="ECO:0000270"/>
    <property type="project" value="FlyBase"/>
</dbReference>
<dbReference type="GO" id="GO:0035217">
    <property type="term" value="P:labial disc development"/>
    <property type="evidence" value="ECO:0000315"/>
    <property type="project" value="FlyBase"/>
</dbReference>
<dbReference type="GO" id="GO:0035168">
    <property type="term" value="P:larval lymph gland hemocyte differentiation"/>
    <property type="evidence" value="ECO:0000315"/>
    <property type="project" value="FlyBase"/>
</dbReference>
<dbReference type="GO" id="GO:0048542">
    <property type="term" value="P:lymph gland development"/>
    <property type="evidence" value="ECO:0000315"/>
    <property type="project" value="FlyBase"/>
</dbReference>
<dbReference type="GO" id="GO:0036098">
    <property type="term" value="P:male germ-line stem cell population maintenance"/>
    <property type="evidence" value="ECO:0000315"/>
    <property type="project" value="UniProtKB"/>
</dbReference>
<dbReference type="GO" id="GO:0007443">
    <property type="term" value="P:Malpighian tubule morphogenesis"/>
    <property type="evidence" value="ECO:0000315"/>
    <property type="project" value="FlyBase"/>
</dbReference>
<dbReference type="GO" id="GO:0007313">
    <property type="term" value="P:maternal specification of dorsal/ventral axis, oocyte, soma encoded"/>
    <property type="evidence" value="ECO:0000315"/>
    <property type="project" value="FlyBase"/>
</dbReference>
<dbReference type="GO" id="GO:0007498">
    <property type="term" value="P:mesoderm development"/>
    <property type="evidence" value="ECO:0000315"/>
    <property type="project" value="UniProtKB"/>
</dbReference>
<dbReference type="GO" id="GO:0010629">
    <property type="term" value="P:negative regulation of gene expression"/>
    <property type="evidence" value="ECO:0000270"/>
    <property type="project" value="FlyBase"/>
</dbReference>
<dbReference type="GO" id="GO:0045705">
    <property type="term" value="P:negative regulation of salivary gland boundary specification"/>
    <property type="evidence" value="ECO:0000304"/>
    <property type="project" value="FlyBase"/>
</dbReference>
<dbReference type="GO" id="GO:0061320">
    <property type="term" value="P:pericardial nephrocyte differentiation"/>
    <property type="evidence" value="ECO:0000315"/>
    <property type="project" value="FlyBase"/>
</dbReference>
<dbReference type="GO" id="GO:0010628">
    <property type="term" value="P:positive regulation of gene expression"/>
    <property type="evidence" value="ECO:0000315"/>
    <property type="project" value="UniProtKB"/>
</dbReference>
<dbReference type="GO" id="GO:0045572">
    <property type="term" value="P:positive regulation of imaginal disc growth"/>
    <property type="evidence" value="ECO:0000315"/>
    <property type="project" value="FlyBase"/>
</dbReference>
<dbReference type="GO" id="GO:0048636">
    <property type="term" value="P:positive regulation of muscle organ development"/>
    <property type="evidence" value="ECO:0000315"/>
    <property type="project" value="FlyBase"/>
</dbReference>
<dbReference type="GO" id="GO:0060391">
    <property type="term" value="P:positive regulation of SMAD protein signal transduction"/>
    <property type="evidence" value="ECO:0000314"/>
    <property type="project" value="FlyBase"/>
</dbReference>
<dbReference type="GO" id="GO:0007458">
    <property type="term" value="P:progression of morphogenetic furrow involved in compound eye morphogenesis"/>
    <property type="evidence" value="ECO:0000315"/>
    <property type="project" value="UniProtKB"/>
</dbReference>
<dbReference type="GO" id="GO:0045464">
    <property type="term" value="P:R8 cell fate specification"/>
    <property type="evidence" value="ECO:0000315"/>
    <property type="project" value="FlyBase"/>
</dbReference>
<dbReference type="GO" id="GO:0045595">
    <property type="term" value="P:regulation of cell differentiation"/>
    <property type="evidence" value="ECO:0000315"/>
    <property type="project" value="FlyBase"/>
</dbReference>
<dbReference type="GO" id="GO:0008360">
    <property type="term" value="P:regulation of cell shape"/>
    <property type="evidence" value="ECO:0000304"/>
    <property type="project" value="UniProtKB"/>
</dbReference>
<dbReference type="GO" id="GO:0045570">
    <property type="term" value="P:regulation of imaginal disc growth"/>
    <property type="evidence" value="ECO:0000315"/>
    <property type="project" value="FlyBase"/>
</dbReference>
<dbReference type="GO" id="GO:2000736">
    <property type="term" value="P:regulation of stem cell differentiation"/>
    <property type="evidence" value="ECO:0000316"/>
    <property type="project" value="FlyBase"/>
</dbReference>
<dbReference type="GO" id="GO:0035158">
    <property type="term" value="P:regulation of tube diameter, open tracheal system"/>
    <property type="evidence" value="ECO:0000315"/>
    <property type="project" value="FlyBase"/>
</dbReference>
<dbReference type="GO" id="GO:0030721">
    <property type="term" value="P:spectrosome organization"/>
    <property type="evidence" value="ECO:0000315"/>
    <property type="project" value="FlyBase"/>
</dbReference>
<dbReference type="GO" id="GO:0035309">
    <property type="term" value="P:wing and notum subfield formation"/>
    <property type="evidence" value="ECO:0000315"/>
    <property type="project" value="UniProtKB"/>
</dbReference>
<dbReference type="GO" id="GO:0035222">
    <property type="term" value="P:wing disc pattern formation"/>
    <property type="evidence" value="ECO:0000315"/>
    <property type="project" value="UniProtKB"/>
</dbReference>
<dbReference type="GO" id="GO:0007352">
    <property type="term" value="P:zygotic specification of dorsal/ventral axis"/>
    <property type="evidence" value="ECO:0000315"/>
    <property type="project" value="UniProtKB"/>
</dbReference>
<dbReference type="CDD" id="cd19392">
    <property type="entry name" value="TGF_beta_DPP"/>
    <property type="match status" value="1"/>
</dbReference>
<dbReference type="FunFam" id="2.10.90.10:FF:000103">
    <property type="entry name" value="Bone morphogenetic protein 16"/>
    <property type="match status" value="1"/>
</dbReference>
<dbReference type="FunFam" id="2.60.120.970:FF:000018">
    <property type="entry name" value="Decapentaplegic, isoform A"/>
    <property type="match status" value="1"/>
</dbReference>
<dbReference type="Gene3D" id="2.60.120.970">
    <property type="match status" value="1"/>
</dbReference>
<dbReference type="Gene3D" id="2.10.90.10">
    <property type="entry name" value="Cystine-knot cytokines"/>
    <property type="match status" value="1"/>
</dbReference>
<dbReference type="InterPro" id="IPR029034">
    <property type="entry name" value="Cystine-knot_cytokine"/>
</dbReference>
<dbReference type="InterPro" id="IPR001839">
    <property type="entry name" value="TGF-b_C"/>
</dbReference>
<dbReference type="InterPro" id="IPR001111">
    <property type="entry name" value="TGF-b_propeptide"/>
</dbReference>
<dbReference type="InterPro" id="IPR015615">
    <property type="entry name" value="TGF-beta-rel"/>
</dbReference>
<dbReference type="InterPro" id="IPR017948">
    <property type="entry name" value="TGFb_CS"/>
</dbReference>
<dbReference type="PANTHER" id="PTHR11848:SF263">
    <property type="entry name" value="PROTEIN DECAPENTAPLEGIC"/>
    <property type="match status" value="1"/>
</dbReference>
<dbReference type="PANTHER" id="PTHR11848">
    <property type="entry name" value="TGF-BETA FAMILY"/>
    <property type="match status" value="1"/>
</dbReference>
<dbReference type="Pfam" id="PF00019">
    <property type="entry name" value="TGF_beta"/>
    <property type="match status" value="1"/>
</dbReference>
<dbReference type="Pfam" id="PF00688">
    <property type="entry name" value="TGFb_propeptide"/>
    <property type="match status" value="1"/>
</dbReference>
<dbReference type="PRINTS" id="PR00669">
    <property type="entry name" value="INHIBINA"/>
</dbReference>
<dbReference type="SMART" id="SM00204">
    <property type="entry name" value="TGFB"/>
    <property type="match status" value="1"/>
</dbReference>
<dbReference type="SUPFAM" id="SSF57501">
    <property type="entry name" value="Cystine-knot cytokines"/>
    <property type="match status" value="1"/>
</dbReference>
<dbReference type="PROSITE" id="PS00250">
    <property type="entry name" value="TGF_BETA_1"/>
    <property type="match status" value="1"/>
</dbReference>
<dbReference type="PROSITE" id="PS51362">
    <property type="entry name" value="TGF_BETA_2"/>
    <property type="match status" value="1"/>
</dbReference>